<name>PK81D_PSEFD</name>
<organism>
    <name type="scientific">Pseudocercospora fijiensis (strain CIRAD86)</name>
    <name type="common">Black leaf streak disease fungus</name>
    <name type="synonym">Mycosphaerella fijiensis</name>
    <dbReference type="NCBI Taxonomy" id="383855"/>
    <lineage>
        <taxon>Eukaryota</taxon>
        <taxon>Fungi</taxon>
        <taxon>Dikarya</taxon>
        <taxon>Ascomycota</taxon>
        <taxon>Pezizomycotina</taxon>
        <taxon>Dothideomycetes</taxon>
        <taxon>Dothideomycetidae</taxon>
        <taxon>Mycosphaerellales</taxon>
        <taxon>Mycosphaerellaceae</taxon>
        <taxon>Pseudocercospora</taxon>
    </lineage>
</organism>
<reference key="1">
    <citation type="journal article" date="2012" name="PLoS Pathog.">
        <title>Diverse lifestyles and strategies of plant pathogenesis encoded in the genomes of eighteen Dothideomycetes fungi.</title>
        <authorList>
            <person name="Ohm R.A."/>
            <person name="Feau N."/>
            <person name="Henrissat B."/>
            <person name="Schoch C.L."/>
            <person name="Horwitz B.A."/>
            <person name="Barry K.W."/>
            <person name="Condon B.J."/>
            <person name="Copeland A.C."/>
            <person name="Dhillon B."/>
            <person name="Glaser F."/>
            <person name="Hesse C.N."/>
            <person name="Kosti I."/>
            <person name="LaButti K."/>
            <person name="Lindquist E.A."/>
            <person name="Lucas S."/>
            <person name="Salamov A.A."/>
            <person name="Bradshaw R.E."/>
            <person name="Ciuffetti L."/>
            <person name="Hamelin R.C."/>
            <person name="Kema G.H.J."/>
            <person name="Lawrence C."/>
            <person name="Scott J.A."/>
            <person name="Spatafora J.W."/>
            <person name="Turgeon B.G."/>
            <person name="de Wit P.J.G.M."/>
            <person name="Zhong S."/>
            <person name="Goodwin S.B."/>
            <person name="Grigoriev I.V."/>
        </authorList>
    </citation>
    <scope>NUCLEOTIDE SEQUENCE [LARGE SCALE GENOMIC DNA]</scope>
    <source>
        <strain>CIRAD86</strain>
    </source>
</reference>
<reference key="2">
    <citation type="journal article" date="2016" name="PLoS ONE">
        <title>Bioinformatics prediction of polyketide synthase gene clusters from Mycosphaerella fijiensis.</title>
        <authorList>
            <person name="Noar R.D."/>
            <person name="Daub M.E."/>
        </authorList>
    </citation>
    <scope>IDENTIFICATION</scope>
    <scope>FUNCTION</scope>
</reference>
<reference key="3">
    <citation type="journal article" date="2019" name="PLoS ONE">
        <title>A novel polyketide synthase gene cluster in the plant pathogenic fungus Pseudocercospora fijiensis.</title>
        <authorList>
            <person name="Noar R.D."/>
            <person name="Thomas E."/>
            <person name="Daub M.E."/>
        </authorList>
    </citation>
    <scope>FUNCTION</scope>
    <scope>INDUCTION</scope>
    <scope>PATHWAY</scope>
</reference>
<gene>
    <name type="ORF">MYCFIDRAFT_204672</name>
</gene>
<comment type="function">
    <text evidence="4 5 8">Cytochrome P450 monooxygenase; part of the gene cluster that mediates the biosynthesis of an emodin derivative that may be involved in black Sigatoka disease of banana (PubMed:27388157, PubMed:30735556). The pathway begins with the synthesis of atrochrysone thioester by the polyketide synthase PKS8-1 (Probable). The atrochrysone carboxyl ACP thioesterase MYCFIDRAFT_190111 then breaks the thioester bond and releases the atrochrysone carboxylic acid from PKS8-1 (Probable). The decarboxylase MYCFIDRAFT_34057 then catalyzes the concerted decarboxylation-elimination required to convert atochrysone carboxylic acid into emodin anthrone, which is further oxidized to emodin by the anthrone oxygenase MYCFIDRAFT_34418 (Probable). The functions of the other tailoring enzymes as well as the final product of the cluster have still to be identified (Probable).</text>
</comment>
<comment type="cofactor">
    <cofactor evidence="1">
        <name>heme</name>
        <dbReference type="ChEBI" id="CHEBI:30413"/>
    </cofactor>
</comment>
<comment type="pathway">
    <text evidence="8">Secondary metabolite biosynthesis.</text>
</comment>
<comment type="subcellular location">
    <subcellularLocation>
        <location evidence="2">Membrane</location>
        <topology evidence="2">Single-pass membrane protein</topology>
    </subcellularLocation>
</comment>
<comment type="induction">
    <text evidence="5">Expression is positively regulated by the cluster-specific transcription factor MYCFIDRAFT_198930 and is up-regulated during banana leaves infection.</text>
</comment>
<comment type="similarity">
    <text evidence="7">Belongs to the cytochrome P450 family.</text>
</comment>
<accession>M3A333</accession>
<sequence length="492" mass="55499">MALGFLVYLSYTPRIKGNIPAFTPETYPIIGSYKFFTHKLSFWKAAQRASKNGMFSFWLGKNHVVGVSGEAARKMYLENPAMDHIKGVILIGHGPDYIDGRKTKQHGIWLPVMAGNKSYAQKNVLNCQKTAELTKRLPKVTNDVRKAFESVASQGFIINPARMCAVLTWDTATRVFAADELIDVPENRAKLLYYLPILQKTSSCHLLSFPWASYFSLPYWKRKYGREGMRRLVTPIVEARMRIIDPVRADDPLQTFVDNGDSADYMINFLISMIFISAANGCVVSGAMLYSIAHHPELQEKIYQEIKAAANQYAADSSAPLVDQLDSLPVKAWENMSETIDLCYKECIRMWVAFPMGRMNEGTTDIKIPGTDEVVPAGGLCCYNTIDVHYSEKLYPEPLKWDPARFGEGRKEMEQEAHGFMGWGAGRHPCNGIRWAKIQQNMMLAYAFAMYKWTGCHKDGSPNTDFIPPTTALNELAPSLPQNLFLKAEPRK</sequence>
<protein>
    <recommendedName>
        <fullName evidence="6">Cytochrome P450 monooxygenase MYCFIDRAFT_204672</fullName>
        <ecNumber evidence="8">1.14.13.-</ecNumber>
    </recommendedName>
    <alternativeName>
        <fullName evidence="6">PKS8-1 gene cluster protein MYCFIDRAFT_204672</fullName>
    </alternativeName>
</protein>
<dbReference type="EC" id="1.14.13.-" evidence="8"/>
<dbReference type="EMBL" id="KB446562">
    <property type="protein sequence ID" value="EME79061.1"/>
    <property type="molecule type" value="Genomic_DNA"/>
</dbReference>
<dbReference type="RefSeq" id="XP_007929885.1">
    <property type="nucleotide sequence ID" value="XM_007931694.1"/>
</dbReference>
<dbReference type="SMR" id="M3A333"/>
<dbReference type="GeneID" id="19336302"/>
<dbReference type="KEGG" id="pfj:MYCFIDRAFT_204672"/>
<dbReference type="VEuPathDB" id="FungiDB:MYCFIDRAFT_204672"/>
<dbReference type="eggNOG" id="KOG0158">
    <property type="taxonomic scope" value="Eukaryota"/>
</dbReference>
<dbReference type="HOGENOM" id="CLU_033574_2_0_1"/>
<dbReference type="OrthoDB" id="1055148at2759"/>
<dbReference type="Proteomes" id="UP000016932">
    <property type="component" value="Unassembled WGS sequence"/>
</dbReference>
<dbReference type="GO" id="GO:0016020">
    <property type="term" value="C:membrane"/>
    <property type="evidence" value="ECO:0007669"/>
    <property type="project" value="UniProtKB-SubCell"/>
</dbReference>
<dbReference type="GO" id="GO:0020037">
    <property type="term" value="F:heme binding"/>
    <property type="evidence" value="ECO:0007669"/>
    <property type="project" value="InterPro"/>
</dbReference>
<dbReference type="GO" id="GO:0005506">
    <property type="term" value="F:iron ion binding"/>
    <property type="evidence" value="ECO:0007669"/>
    <property type="project" value="InterPro"/>
</dbReference>
<dbReference type="GO" id="GO:0004497">
    <property type="term" value="F:monooxygenase activity"/>
    <property type="evidence" value="ECO:0007669"/>
    <property type="project" value="UniProtKB-KW"/>
</dbReference>
<dbReference type="GO" id="GO:0016705">
    <property type="term" value="F:oxidoreductase activity, acting on paired donors, with incorporation or reduction of molecular oxygen"/>
    <property type="evidence" value="ECO:0007669"/>
    <property type="project" value="InterPro"/>
</dbReference>
<dbReference type="GO" id="GO:0016125">
    <property type="term" value="P:sterol metabolic process"/>
    <property type="evidence" value="ECO:0007669"/>
    <property type="project" value="TreeGrafter"/>
</dbReference>
<dbReference type="CDD" id="cd00302">
    <property type="entry name" value="cytochrome_P450"/>
    <property type="match status" value="1"/>
</dbReference>
<dbReference type="Gene3D" id="1.10.630.10">
    <property type="entry name" value="Cytochrome P450"/>
    <property type="match status" value="1"/>
</dbReference>
<dbReference type="InterPro" id="IPR001128">
    <property type="entry name" value="Cyt_P450"/>
</dbReference>
<dbReference type="InterPro" id="IPR036396">
    <property type="entry name" value="Cyt_P450_sf"/>
</dbReference>
<dbReference type="PANTHER" id="PTHR24286">
    <property type="entry name" value="CYTOCHROME P450 26"/>
    <property type="match status" value="1"/>
</dbReference>
<dbReference type="PANTHER" id="PTHR24286:SF24">
    <property type="entry name" value="LANOSTEROL 14-ALPHA DEMETHYLASE"/>
    <property type="match status" value="1"/>
</dbReference>
<dbReference type="Pfam" id="PF00067">
    <property type="entry name" value="p450"/>
    <property type="match status" value="1"/>
</dbReference>
<dbReference type="SUPFAM" id="SSF48264">
    <property type="entry name" value="Cytochrome P450"/>
    <property type="match status" value="1"/>
</dbReference>
<keyword id="KW-0325">Glycoprotein</keyword>
<keyword id="KW-0349">Heme</keyword>
<keyword id="KW-0408">Iron</keyword>
<keyword id="KW-0472">Membrane</keyword>
<keyword id="KW-0479">Metal-binding</keyword>
<keyword id="KW-0503">Monooxygenase</keyword>
<keyword id="KW-0560">Oxidoreductase</keyword>
<keyword id="KW-1185">Reference proteome</keyword>
<keyword id="KW-0812">Transmembrane</keyword>
<keyword id="KW-1133">Transmembrane helix</keyword>
<evidence type="ECO:0000250" key="1">
    <source>
        <dbReference type="UniProtKB" id="P04798"/>
    </source>
</evidence>
<evidence type="ECO:0000255" key="2"/>
<evidence type="ECO:0000255" key="3">
    <source>
        <dbReference type="PROSITE-ProRule" id="PRU00498"/>
    </source>
</evidence>
<evidence type="ECO:0000269" key="4">
    <source>
    </source>
</evidence>
<evidence type="ECO:0000269" key="5">
    <source>
    </source>
</evidence>
<evidence type="ECO:0000303" key="6">
    <source>
    </source>
</evidence>
<evidence type="ECO:0000305" key="7"/>
<evidence type="ECO:0000305" key="8">
    <source>
    </source>
</evidence>
<feature type="chain" id="PRO_0000451121" description="Cytochrome P450 monooxygenase MYCFIDRAFT_204672">
    <location>
        <begin position="1"/>
        <end position="492"/>
    </location>
</feature>
<feature type="transmembrane region" description="Helical" evidence="2">
    <location>
        <begin position="269"/>
        <end position="293"/>
    </location>
</feature>
<feature type="binding site" description="axial binding residue" evidence="1">
    <location>
        <position position="430"/>
    </location>
    <ligand>
        <name>heme</name>
        <dbReference type="ChEBI" id="CHEBI:30413"/>
    </ligand>
    <ligandPart>
        <name>Fe</name>
        <dbReference type="ChEBI" id="CHEBI:18248"/>
    </ligandPart>
</feature>
<feature type="glycosylation site" description="N-linked (GlcNAc...) asparagine" evidence="3">
    <location>
        <position position="116"/>
    </location>
</feature>
<feature type="glycosylation site" description="N-linked (GlcNAc...) asparagine" evidence="3">
    <location>
        <position position="335"/>
    </location>
</feature>
<proteinExistence type="evidence at transcript level"/>